<comment type="function">
    <text evidence="1 3 4 6 7 12 13 14 15 16 19">Counteracts the innate antiviral activity of host APOBEC3F and APOBEC3G by promoting their ubiquitination and degradation. Acts as a substrate recognition component of an E3 ubiquitin-protein ligase complex: mechanistically, Vif hijacks a host cullin-5-RING E3 ubiquitin-protein ligase complex (ECS complex) and the transcription coactivator CBFB/CBF-beta to form an active E3 ubiquitin-protein ligase complex that targets APOBEC3G and APOBEC3F for polyubiquitination, leading to their degradation by the proteasome. Vif interaction with APOBEC3G also blocks its cytidine deaminase activity in a proteasome-independent manner, suggesting a dual inhibitory mechanism. May interact directly with APOBEC3G mRNA in order to inhibit its translation. Association with CBFB/CBF-beta also inhibits the transcription coactivator activity of CBFB/CBF-beta. Seems to play a role in viral morphology by affecting the stability of the viral nucleoprotein core. Finally, Vif also contributes to the G2 cell cycle arrest observed in HIV infected cells.</text>
</comment>
<comment type="subunit">
    <text evidence="1 5 6 8 9 10 11 14 16 20">Homomultimer; in vitro and presumably in vivo. Interacts with viral RNA and Pr55Gag precursor; these interactions mediate Vif incorporation into the virion. Interacts with the viral reverse transcriptase. Forms cullin-5-RING E3 ubiquitin-protein ligase complex (ECS complex) by interacting with host CUL5, RBX2, elongin BC complex (ELOB and ELOC) and CBFB/CBF-beta. Within the ECS complex, Vif interacts directly with host CUL5, ELOC and APOBEC (APOBEC3F and APOBEC3G) substrates. The ECS complex also contains some single-stranded RNA (ssRNA) that acts as a glue that bridges Vif with APOBEC (APOBEC3F and APOBEC3G) substrates. Interacts with host UBCE7IP1 isoform 3/ZIN and possibly with SAT. Interacts with host tyrosine kinases HCK and FYN; these interactions may decrease level of phosphorylated APOBEC3G incorporation into virions. Interacts with host ABCE1; this interaction may play a role in protecting viral RNA from damage during viral assembly. Interacts with host MDM2; this interaction targets Vif for degradation by the proteasome.</text>
</comment>
<comment type="interaction">
    <interactant intactId="EBI-15528966">
        <id>P69723</id>
    </interactant>
    <interactant intactId="EBI-15528966">
        <id>P69723</id>
        <label>vif</label>
    </interactant>
    <organismsDiffer>false</organismsDiffer>
    <experiments>4</experiments>
</comment>
<comment type="interaction">
    <interactant intactId="EBI-15528966">
        <id>P69723</id>
    </interactant>
    <interactant intactId="EBI-717839">
        <id>Q9HC16</id>
        <label>APOBEC3G</label>
    </interactant>
    <organismsDiffer>true</organismsDiffer>
    <experiments>3</experiments>
</comment>
<comment type="subcellular location">
    <subcellularLocation>
        <location evidence="1">Host cytoplasm</location>
    </subcellularLocation>
    <subcellularLocation>
        <location evidence="1">Host cell membrane</location>
        <topology evidence="1">Peripheral membrane protein</topology>
        <orientation evidence="1">Cytoplasmic side</orientation>
    </subcellularLocation>
    <subcellularLocation>
        <location evidence="1">Virion</location>
    </subcellularLocation>
    <text evidence="1">In the cytoplasm, seems to colocalize with intermediate filament vimentin. A fraction is associated with the cytoplasmic side of cellular membranes, presumably via the interaction with Pr55Gag precursor. Incorporated in virions at a ratio of approximately 7 to 20 molecules per virion.</text>
</comment>
<comment type="induction">
    <text evidence="1">Expressed late during infection in a Rev-dependent manner.</text>
</comment>
<comment type="domain">
    <text evidence="1">The BC-like-box motif mediates the interaction with elongin BC complex.</text>
</comment>
<comment type="domain">
    <text evidence="1">The HCCH motif (H-x(5)-C-x(18)-C-x(5)-H) mediates the interaction with CUL5.</text>
</comment>
<comment type="PTM">
    <text evidence="1 18 21">Highly phosphorylated on serine and threonine residues (By similarity). Thr-96 and Ser-165 are phosphorylated by the mitogen activated kinase MAP4K1. As the HIV-1 replication can be activated by stress and mitogens, these phosphorylations could be involved in this process. Ser-144 phosphorylation may inhibit elongin BC complex binding.</text>
</comment>
<comment type="PTM">
    <text evidence="1">Processed in virion by the viral protease.</text>
</comment>
<comment type="PTM">
    <text evidence="1">Polyubiquitinated and degraded by the proteasome in the presence of APOBEC3G.</text>
</comment>
<comment type="miscellaneous">
    <text evidence="1">Vif-defective viruses show catastrophic failure in reverse transcription due to APOBEC-induced mutations that initiate a DNA base repair pathway and compromise the structural integrity of the ssDNA. In the absence of Vif, the virion is morphologically abnormal.</text>
</comment>
<comment type="miscellaneous">
    <text evidence="1">HIV-1 lineages are divided in three main groups, M (for Major), O (for Outlier), and N (for New, or Non-M, Non-O). The vast majority of strains found worldwide belong to the group M. Group O seems to be endemic to and largely confined to Cameroon and neighboring countries in West Central Africa, where these viruses represent a small minority of HIV-1 strains. The group N is represented by a limited number of isolates from Cameroonian persons. The group M is further subdivided in 9 clades or subtypes (A to D, F to H, J and K).</text>
</comment>
<comment type="miscellaneous">
    <text evidence="1">Required for replication in 'nonpermissive' cells, including primary T-cells, macrophages and certain T-cell lines, but is dispensable for replication in 'permissive' cell lines, such as 293T cells. In nonpermissive cells, Vif-defective viruses can produce virions, but they fail to complete reverse transcription and cannot successfully infect new cells.</text>
</comment>
<comment type="similarity">
    <text evidence="1 22">Belongs to the primate lentivirus group Vif protein family.</text>
</comment>
<dbReference type="EMBL" id="K03455">
    <property type="protein sequence ID" value="AAB50260.1"/>
    <property type="molecule type" value="Genomic_RNA"/>
</dbReference>
<dbReference type="RefSeq" id="NP_057851.1">
    <property type="nucleotide sequence ID" value="NC_001802.1"/>
</dbReference>
<dbReference type="PDB" id="8CX0">
    <property type="method" value="EM"/>
    <property type="resolution" value="2.70 A"/>
    <property type="chains" value="B=1-192"/>
</dbReference>
<dbReference type="PDB" id="8CX1">
    <property type="method" value="EM"/>
    <property type="resolution" value="3.30 A"/>
    <property type="chains" value="B/G=1-192"/>
</dbReference>
<dbReference type="PDB" id="8CX2">
    <property type="method" value="EM"/>
    <property type="resolution" value="3.20 A"/>
    <property type="chains" value="B/G=1-192"/>
</dbReference>
<dbReference type="PDBsum" id="8CX0"/>
<dbReference type="PDBsum" id="8CX1"/>
<dbReference type="PDBsum" id="8CX2"/>
<dbReference type="SMR" id="P69723"/>
<dbReference type="BioGRID" id="1205539">
    <property type="interactions" value="64"/>
</dbReference>
<dbReference type="DIP" id="DIP-61318N"/>
<dbReference type="IntAct" id="P69723">
    <property type="interactions" value="5"/>
</dbReference>
<dbReference type="iPTMnet" id="P69723"/>
<dbReference type="GeneID" id="155459"/>
<dbReference type="KEGG" id="vg:155459"/>
<dbReference type="Reactome" id="R-HSA-162585">
    <property type="pathway name" value="Uncoating of the HIV Virion"/>
</dbReference>
<dbReference type="Reactome" id="R-HSA-162588">
    <property type="pathway name" value="Budding and maturation of HIV virion"/>
</dbReference>
<dbReference type="Reactome" id="R-HSA-162592">
    <property type="pathway name" value="Integration of provirus"/>
</dbReference>
<dbReference type="Reactome" id="R-HSA-162594">
    <property type="pathway name" value="Early Phase of HIV Life Cycle"/>
</dbReference>
<dbReference type="Reactome" id="R-HSA-164516">
    <property type="pathway name" value="Minus-strand DNA synthesis"/>
</dbReference>
<dbReference type="Reactome" id="R-HSA-164525">
    <property type="pathway name" value="Plus-strand DNA synthesis"/>
</dbReference>
<dbReference type="Reactome" id="R-HSA-164843">
    <property type="pathway name" value="2-LTR circle formation"/>
</dbReference>
<dbReference type="Reactome" id="R-HSA-173107">
    <property type="pathway name" value="Binding and entry of HIV virion"/>
</dbReference>
<dbReference type="Reactome" id="R-HSA-175474">
    <property type="pathway name" value="Assembly Of The HIV Virion"/>
</dbReference>
<dbReference type="Reactome" id="R-HSA-175567">
    <property type="pathway name" value="Integration of viral DNA into host genomic DNA"/>
</dbReference>
<dbReference type="Reactome" id="R-HSA-177539">
    <property type="pathway name" value="Autointegration results in viral DNA circles"/>
</dbReference>
<dbReference type="Reactome" id="R-HSA-180585">
    <property type="pathway name" value="Vif-mediated degradation of APOBEC3G"/>
</dbReference>
<dbReference type="Reactome" id="R-HSA-180689">
    <property type="pathway name" value="APOBEC3G mediated resistance to HIV-1 infection"/>
</dbReference>
<dbReference type="Reactome" id="R-HSA-180910">
    <property type="pathway name" value="Vpr-mediated nuclear import of PICs"/>
</dbReference>
<dbReference type="PRO" id="PR:P69723"/>
<dbReference type="Proteomes" id="UP000002241">
    <property type="component" value="Segment"/>
</dbReference>
<dbReference type="GO" id="GO:0030430">
    <property type="term" value="C:host cell cytoplasm"/>
    <property type="evidence" value="ECO:0000314"/>
    <property type="project" value="UniProt"/>
</dbReference>
<dbReference type="GO" id="GO:0020002">
    <property type="term" value="C:host cell plasma membrane"/>
    <property type="evidence" value="ECO:0007669"/>
    <property type="project" value="UniProtKB-SubCell"/>
</dbReference>
<dbReference type="GO" id="GO:0005886">
    <property type="term" value="C:plasma membrane"/>
    <property type="evidence" value="ECO:0000269"/>
    <property type="project" value="DisProt"/>
</dbReference>
<dbReference type="GO" id="GO:0044423">
    <property type="term" value="C:virion component"/>
    <property type="evidence" value="ECO:0007669"/>
    <property type="project" value="UniProtKB-UniRule"/>
</dbReference>
<dbReference type="GO" id="GO:0042802">
    <property type="term" value="F:identical protein binding"/>
    <property type="evidence" value="ECO:0000353"/>
    <property type="project" value="IntAct"/>
</dbReference>
<dbReference type="GO" id="GO:0008289">
    <property type="term" value="F:lipid binding"/>
    <property type="evidence" value="ECO:0000269"/>
    <property type="project" value="DisProt"/>
</dbReference>
<dbReference type="GO" id="GO:0046872">
    <property type="term" value="F:metal ion binding"/>
    <property type="evidence" value="ECO:0007669"/>
    <property type="project" value="UniProtKB-KW"/>
</dbReference>
<dbReference type="GO" id="GO:0030674">
    <property type="term" value="F:protein-macromolecule adaptor activity"/>
    <property type="evidence" value="ECO:0000314"/>
    <property type="project" value="UniProt"/>
</dbReference>
<dbReference type="GO" id="GO:0003723">
    <property type="term" value="F:RNA binding"/>
    <property type="evidence" value="ECO:0007669"/>
    <property type="project" value="UniProtKB-UniRule"/>
</dbReference>
<dbReference type="GO" id="GO:1990756">
    <property type="term" value="F:ubiquitin-like ligase-substrate adaptor activity"/>
    <property type="evidence" value="ECO:0000314"/>
    <property type="project" value="UniProt"/>
</dbReference>
<dbReference type="GO" id="GO:0043161">
    <property type="term" value="P:proteasome-mediated ubiquitin-dependent protein catabolic process"/>
    <property type="evidence" value="ECO:0000314"/>
    <property type="project" value="UniProt"/>
</dbReference>
<dbReference type="GO" id="GO:0039537">
    <property type="term" value="P:symbiont-mediated suppression of cytoplasmic pattern recognition receptor signaling pathway"/>
    <property type="evidence" value="ECO:0000314"/>
    <property type="project" value="UniProt"/>
</dbReference>
<dbReference type="GO" id="GO:0052170">
    <property type="term" value="P:symbiont-mediated suppression of host innate immune response"/>
    <property type="evidence" value="ECO:0000314"/>
    <property type="project" value="UniProt"/>
</dbReference>
<dbReference type="GO" id="GO:0019079">
    <property type="term" value="P:viral genome replication"/>
    <property type="evidence" value="ECO:0000269"/>
    <property type="project" value="DisProt"/>
</dbReference>
<dbReference type="DisProt" id="DP00875"/>
<dbReference type="HAMAP" id="MF_04081">
    <property type="entry name" value="HIV_VIF"/>
    <property type="match status" value="1"/>
</dbReference>
<dbReference type="InterPro" id="IPR000475">
    <property type="entry name" value="Vif"/>
</dbReference>
<dbReference type="Pfam" id="PF00559">
    <property type="entry name" value="Vif"/>
    <property type="match status" value="1"/>
</dbReference>
<dbReference type="PRINTS" id="PR00349">
    <property type="entry name" value="VIRIONINFFCT"/>
</dbReference>
<organismHost>
    <name type="scientific">Homo sapiens</name>
    <name type="common">Human</name>
    <dbReference type="NCBI Taxonomy" id="9606"/>
</organismHost>
<keyword id="KW-0002">3D-structure</keyword>
<keyword id="KW-0014">AIDS</keyword>
<keyword id="KW-0903">Direct protein sequencing</keyword>
<keyword id="KW-1032">Host cell membrane</keyword>
<keyword id="KW-1035">Host cytoplasm</keyword>
<keyword id="KW-1043">Host membrane</keyword>
<keyword id="KW-0945">Host-virus interaction</keyword>
<keyword id="KW-0472">Membrane</keyword>
<keyword id="KW-0479">Metal-binding</keyword>
<keyword id="KW-0597">Phosphoprotein</keyword>
<keyword id="KW-1185">Reference proteome</keyword>
<keyword id="KW-0694">RNA-binding</keyword>
<keyword id="KW-0832">Ubl conjugation</keyword>
<keyword id="KW-0833">Ubl conjugation pathway</keyword>
<keyword id="KW-0946">Virion</keyword>
<keyword id="KW-0862">Zinc</keyword>
<feature type="chain" id="PRO_0000042759" description="Virion infectivity factor" evidence="1">
    <location>
        <begin position="1"/>
        <end position="192"/>
    </location>
</feature>
<feature type="chain" id="PRO_0000042760" description="p17" evidence="1">
    <location>
        <begin position="1"/>
        <end position="150"/>
    </location>
</feature>
<feature type="chain" id="PRO_0000042761" description="p7" evidence="1">
    <location>
        <begin position="151"/>
        <end position="192"/>
    </location>
</feature>
<feature type="region of interest" description="Interaction with host APOBEC3F; F1-box" evidence="1">
    <location>
        <begin position="14"/>
        <end position="17"/>
    </location>
</feature>
<feature type="region of interest" description="Interaction with host APOBEC3G; G-box" evidence="1">
    <location>
        <begin position="40"/>
        <end position="44"/>
    </location>
</feature>
<feature type="region of interest" description="Interaction with host APOBEC3F and APOBEC3G; FG-box" evidence="1">
    <location>
        <begin position="54"/>
        <end position="72"/>
    </location>
</feature>
<feature type="region of interest" description="Interaction with host APOBEC3F; F2-box" evidence="1">
    <location>
        <begin position="74"/>
        <end position="79"/>
    </location>
</feature>
<feature type="region of interest" description="RNA-binding" evidence="1">
    <location>
        <begin position="75"/>
        <end position="114"/>
    </location>
</feature>
<feature type="region of interest" description="SOCS box-like" evidence="1">
    <location>
        <begin position="151"/>
        <end position="180"/>
    </location>
</feature>
<feature type="region of interest" description="Multimerization" evidence="1">
    <location>
        <begin position="151"/>
        <end position="164"/>
    </location>
</feature>
<feature type="region of interest" description="Disordered" evidence="2">
    <location>
        <begin position="164"/>
        <end position="192"/>
    </location>
</feature>
<feature type="region of interest" description="Membrane association" evidence="1">
    <location>
        <begin position="171"/>
        <end position="172"/>
    </location>
</feature>
<feature type="short sequence motif" description="HCCH motif" evidence="1">
    <location>
        <begin position="108"/>
        <end position="139"/>
    </location>
</feature>
<feature type="short sequence motif" description="BC-box-like motif" evidence="1">
    <location>
        <begin position="144"/>
        <end position="153"/>
    </location>
</feature>
<feature type="compositionally biased region" description="Basic residues" evidence="2">
    <location>
        <begin position="176"/>
        <end position="186"/>
    </location>
</feature>
<feature type="binding site" evidence="6 16 23">
    <location>
        <position position="108"/>
    </location>
    <ligand>
        <name>Zn(2+)</name>
        <dbReference type="ChEBI" id="CHEBI:29105"/>
    </ligand>
</feature>
<feature type="binding site" evidence="6 16 23">
    <location>
        <position position="114"/>
    </location>
    <ligand>
        <name>Zn(2+)</name>
        <dbReference type="ChEBI" id="CHEBI:29105"/>
    </ligand>
</feature>
<feature type="binding site" evidence="6 16 23">
    <location>
        <position position="133"/>
    </location>
    <ligand>
        <name>Zn(2+)</name>
        <dbReference type="ChEBI" id="CHEBI:29105"/>
    </ligand>
</feature>
<feature type="binding site" evidence="6 16 23">
    <location>
        <position position="139"/>
    </location>
    <ligand>
        <name>Zn(2+)</name>
        <dbReference type="ChEBI" id="CHEBI:29105"/>
    </ligand>
</feature>
<feature type="site" description="Cleavage in virion (by viral protease)" evidence="1">
    <location>
        <begin position="150"/>
        <end position="151"/>
    </location>
</feature>
<feature type="modified residue" description="Phosphothreonine; by host MAP4K1" evidence="1 21">
    <location>
        <position position="96"/>
    </location>
</feature>
<feature type="modified residue" description="Phosphoserine; by host" evidence="1 18">
    <location>
        <position position="144"/>
    </location>
</feature>
<feature type="modified residue" description="Phosphothreonine; by host" evidence="1 18">
    <location>
        <position position="155"/>
    </location>
</feature>
<feature type="modified residue" description="Phosphoserine; by host MAP4K1" evidence="1 21">
    <location>
        <position position="165"/>
    </location>
</feature>
<feature type="modified residue" description="Phosphothreonine; by host" evidence="1 18">
    <location>
        <position position="188"/>
    </location>
</feature>
<feature type="mutagenesis site" description="Impaired viral infectivity." evidence="16">
    <original>K</original>
    <variation>Y</variation>
    <variation>F</variation>
    <variation>W</variation>
    <variation>V</variation>
    <location>
        <position position="22"/>
    </location>
</feature>
<feature type="mutagenesis site" description="Impaired viral infectivity." evidence="16">
    <original>S</original>
    <variation>D</variation>
    <variation>I</variation>
    <location>
        <position position="23"/>
    </location>
</feature>
<feature type="mutagenesis site" description="Loss of viral infectivity." evidence="16">
    <original>K</original>
    <variation>A</variation>
    <location>
        <position position="26"/>
    </location>
</feature>
<feature type="mutagenesis site" description="Impaired viral infectivity." evidence="16">
    <original>Y</original>
    <variation>K</variation>
    <variation>D</variation>
    <variation>L</variation>
    <variation>A</variation>
    <variation>W</variation>
    <location>
        <position position="40"/>
    </location>
</feature>
<feature type="mutagenesis site" description="Does not affect viral infectivity." evidence="6">
    <original>E</original>
    <variation>N</variation>
    <location>
        <position position="76"/>
    </location>
</feature>
<feature type="mutagenesis site" description="Does not affect viral infectivity." evidence="6">
    <original>H</original>
    <variation>N</variation>
    <location>
        <position position="80"/>
    </location>
</feature>
<feature type="mutagenesis site" description="90% loss of reverse transcriptase activity in virions; no effect on the ability to decrease APOBEC3G level." evidence="21">
    <original>T</original>
    <variation>A</variation>
    <location>
        <position position="96"/>
    </location>
</feature>
<feature type="mutagenesis site" description="Complete loss of viral infectivity in non permissive cells; no effect on the ability to decrease APOBEC3G level." evidence="21">
    <original>T</original>
    <variation>E</variation>
    <location>
        <position position="96"/>
    </location>
</feature>
<feature type="mutagenesis site" description="Does not affect viral infectivity." evidence="6">
    <original>D</original>
    <variation>N</variation>
    <location>
        <position position="104"/>
    </location>
</feature>
<feature type="mutagenesis site" description="Abolished zinc-binding and viral infectivity." evidence="6">
    <original>H</original>
    <variation>N</variation>
    <location>
        <position position="108"/>
    </location>
</feature>
<feature type="mutagenesis site" description="Abolished zinc-binding and viral infectivity. Reduces the ability to decrease APOBEC3G level; when associated with S-133." evidence="4 6">
    <original>C</original>
    <variation>S</variation>
    <location>
        <position position="114"/>
    </location>
</feature>
<feature type="mutagenesis site" description="Decreased interaction with host CUL5." evidence="6">
    <original>IRKAL</original>
    <variation>SRKSS</variation>
    <location>
        <begin position="120"/>
        <end position="124"/>
    </location>
</feature>
<feature type="mutagenesis site" description="Does not affect interaction with host CUL5." evidence="6">
    <original>RK</original>
    <variation>SS</variation>
    <location>
        <begin position="121"/>
        <end position="122"/>
    </location>
</feature>
<feature type="mutagenesis site" description="Abolished zinc-binding and viral infectivity. Reduces the ability to decrease APOBEC3G level; when associated with S-114." evidence="4 6">
    <original>C</original>
    <variation>S</variation>
    <location>
        <position position="133"/>
    </location>
</feature>
<feature type="mutagenesis site" description="Abolished zinc-binding and viral infectivity." evidence="6">
    <original>H</original>
    <variation>N</variation>
    <location>
        <position position="139"/>
    </location>
</feature>
<feature type="mutagenesis site" description="90% loss of viral infectivity in non permissive cells; no effect on the ability to decrease APOBEC3G level." evidence="18">
    <original>S</original>
    <variation>A</variation>
    <location>
        <position position="144"/>
    </location>
</feature>
<feature type="mutagenesis site" description="75% loss of membrane binding; decrease Pr55Gag binding." evidence="17">
    <original>KKIK</original>
    <variation>AAIA</variation>
    <location>
        <begin position="157"/>
        <end position="160"/>
    </location>
</feature>
<feature type="mutagenesis site" description="40% loss of membrane binding; decrease Pr55Gag binding.">
    <original>RWNKPQK</original>
    <variation>AWNAPQA</variation>
    <location>
        <begin position="173"/>
        <end position="179"/>
    </location>
</feature>
<feature type="mutagenesis site" description="25% loss of membrane binding; decrease Pr55Gag binding.">
    <original>KTKGHR</original>
    <variation>ATAGHA</variation>
    <location>
        <begin position="179"/>
        <end position="184"/>
    </location>
</feature>
<feature type="mutagenesis site" description="No effect on the ability to decrease APOBEC3G level." evidence="4">
    <original>T</original>
    <variation>A</variation>
    <location>
        <position position="188"/>
    </location>
</feature>
<feature type="strand" evidence="26">
    <location>
        <begin position="5"/>
        <end position="13"/>
    </location>
</feature>
<feature type="helix" evidence="26">
    <location>
        <begin position="15"/>
        <end position="30"/>
    </location>
</feature>
<feature type="turn" evidence="26">
    <location>
        <begin position="34"/>
        <end position="37"/>
    </location>
</feature>
<feature type="strand" evidence="26">
    <location>
        <begin position="39"/>
        <end position="41"/>
    </location>
</feature>
<feature type="helix" evidence="26">
    <location>
        <begin position="43"/>
        <end position="45"/>
    </location>
</feature>
<feature type="strand" evidence="26">
    <location>
        <begin position="51"/>
        <end position="59"/>
    </location>
</feature>
<feature type="strand" evidence="26">
    <location>
        <begin position="62"/>
        <end position="69"/>
    </location>
</feature>
<feature type="strand" evidence="26">
    <location>
        <begin position="83"/>
        <end position="91"/>
    </location>
</feature>
<feature type="strand" evidence="26">
    <location>
        <begin position="94"/>
        <end position="97"/>
    </location>
</feature>
<feature type="helix" evidence="26">
    <location>
        <begin position="100"/>
        <end position="107"/>
    </location>
</feature>
<feature type="turn" evidence="26">
    <location>
        <begin position="108"/>
        <end position="110"/>
    </location>
</feature>
<feature type="helix" evidence="26">
    <location>
        <begin position="119"/>
        <end position="124"/>
    </location>
</feature>
<feature type="helix" evidence="26">
    <location>
        <begin position="136"/>
        <end position="138"/>
    </location>
</feature>
<feature type="helix" evidence="26">
    <location>
        <begin position="145"/>
        <end position="153"/>
    </location>
</feature>
<feature type="helix" evidence="26">
    <location>
        <begin position="166"/>
        <end position="169"/>
    </location>
</feature>
<organism>
    <name type="scientific">Human immunodeficiency virus type 1 group M subtype B (isolate HXB2)</name>
    <name type="common">HIV-1</name>
    <dbReference type="NCBI Taxonomy" id="11706"/>
    <lineage>
        <taxon>Viruses</taxon>
        <taxon>Riboviria</taxon>
        <taxon>Pararnavirae</taxon>
        <taxon>Artverviricota</taxon>
        <taxon>Revtraviricetes</taxon>
        <taxon>Ortervirales</taxon>
        <taxon>Retroviridae</taxon>
        <taxon>Orthoretrovirinae</taxon>
        <taxon>Lentivirus</taxon>
        <taxon>Human immunodeficiency virus type 1</taxon>
    </lineage>
</organism>
<reference key="1">
    <citation type="journal article" date="1987" name="AIDS Res. Hum. Retroviruses">
        <title>Complete nucleotide sequences of functional clones of the AIDS virus.</title>
        <authorList>
            <person name="Ratner L."/>
            <person name="Fisher A."/>
            <person name="Jagodzinski L.L."/>
            <person name="Mitsuya H."/>
            <person name="Liou R.-S."/>
            <person name="Gallo R.C."/>
            <person name="Wong-Staal F."/>
        </authorList>
    </citation>
    <scope>NUCLEOTIDE SEQUENCE [GENOMIC RNA]</scope>
</reference>
<reference key="2">
    <citation type="journal article" date="1994" name="J. Virol.">
        <title>Subcellular localization of the Vif protein of human immunodeficiency virus type 1.</title>
        <authorList>
            <person name="Goncalves J."/>
            <person name="Jallepalli P."/>
            <person name="Gabuzda D.H."/>
        </authorList>
    </citation>
    <scope>SUBCELLULAR LOCATION</scope>
</reference>
<reference key="3">
    <citation type="journal article" date="1995" name="J. Virol.">
        <title>Biological activity of human immunodeficiency virus type 1 Vif requires membrane targeting by C-terminal basic domains.</title>
        <authorList>
            <person name="Goncalves J."/>
            <person name="Shi B."/>
            <person name="Yang X."/>
            <person name="Gabuzda D."/>
        </authorList>
    </citation>
    <scope>MUTAGENESIS OF 157-LYS--LYS-160 AND 173-ARG--ARG-184</scope>
</reference>
<reference key="4">
    <citation type="journal article" date="1996" name="J. Virol.">
        <title>Cytoskeleton association and virion incorporation of the human immunodeficiency virus type 1 Vif protein.</title>
        <authorList>
            <person name="Karczewski M.K."/>
            <person name="Strebel K."/>
        </authorList>
    </citation>
    <scope>SUBCELLULAR LOCATION</scope>
</reference>
<reference key="5">
    <citation type="journal article" date="1996" name="J. Biol. Chem.">
        <title>Phosphorylation of Vif and its role in HIV-1 replication.</title>
        <authorList>
            <person name="Yang X."/>
            <person name="Goncalves J."/>
            <person name="Gabuzda D."/>
        </authorList>
    </citation>
    <scope>PHOSPHORYLATION AT SER-144; THR-155 AND THR-188</scope>
    <scope>MUTAGENESIS OF SER-144</scope>
</reference>
<reference key="6">
    <citation type="journal article" date="1996" name="J. Virol.">
        <title>Role of Vif in human immunodeficiency virus type 1 reverse transcription.</title>
        <authorList>
            <person name="Goncalves J."/>
            <person name="Korin Y."/>
            <person name="Zack J."/>
            <person name="Gabuzda D."/>
        </authorList>
    </citation>
    <scope>FUNCTION</scope>
</reference>
<reference key="7">
    <citation type="journal article" date="1996" name="J. Virol.">
        <title>Characterization of human immunodeficiency virus type 1 Vif particle incorporation.</title>
        <authorList>
            <person name="Camaur D."/>
            <person name="Trono D."/>
        </authorList>
    </citation>
    <scope>INCORPORATION IN THE VIRION</scope>
</reference>
<reference key="8">
    <citation type="journal article" date="1997" name="J. Virol.">
        <title>Human immunodeficiency virus type 1 Vif protein binds to the Pr55Gag precursor.</title>
        <authorList>
            <person name="Bouyac M."/>
            <person name="Courcoul M."/>
            <person name="Bertoia G."/>
            <person name="Baudat Y."/>
            <person name="Gabuzda D."/>
            <person name="Blanc D."/>
            <person name="Chazal N."/>
            <person name="Boulanger P."/>
            <person name="Sire J."/>
            <person name="Vigne R."/>
            <person name="Spire B."/>
        </authorList>
    </citation>
    <scope>INTERACTION WITH PR55GAG</scope>
</reference>
<reference key="9">
    <citation type="journal article" date="1998" name="J. Biol. Chem.">
        <title>Mitogen-activated protein kinase phosphorylates and regulates the HIV-1 Vif protein.</title>
        <authorList>
            <person name="Yang X."/>
            <person name="Gabuzda D."/>
        </authorList>
    </citation>
    <scope>PHOSPHORYLATION AT THR-96 AND SER-165 BY MAP4K1</scope>
    <scope>PROTEIN SEQUENCE OF 159-164 AND 94-98</scope>
    <scope>MUTAGENESIS OF THR-96</scope>
</reference>
<reference key="10">
    <citation type="journal article" date="2003" name="Science">
        <title>Induction of APOBEC3G ubiquitination and degradation by an HIV-1 Vif-Cul5-SCF complex.</title>
        <authorList>
            <person name="Yu X."/>
            <person name="Yu Y."/>
            <person name="Liu B."/>
            <person name="Luo K."/>
            <person name="Kong W."/>
            <person name="Mao P."/>
            <person name="Yu X.F."/>
        </authorList>
    </citation>
    <scope>FUNCTION</scope>
</reference>
<reference key="11">
    <citation type="journal article" date="2004" name="J. Biol. Chem.">
        <title>Vif overcomes the innate antiviral activity of APOBEC3G by promoting its degradation in the ubiquitin-proteasome pathway.</title>
        <authorList>
            <person name="Mehle A."/>
            <person name="Strack B."/>
            <person name="Ancuta P."/>
            <person name="Zhang C."/>
            <person name="McPike M."/>
            <person name="Gabuzda D."/>
        </authorList>
    </citation>
    <scope>FUNCTION</scope>
    <scope>MUTAGENESIS OF CYS-114; CYS-133 AND THR-188</scope>
</reference>
<reference key="12">
    <citation type="journal article" date="2004" name="Trends Mol. Med.">
        <title>The viral infectivity factor (Vif) of HIV-1 unveiled.</title>
        <authorList>
            <person name="Rose K.M."/>
            <person name="Marin M."/>
            <person name="Kozak S.L."/>
            <person name="Kabat D."/>
        </authorList>
    </citation>
    <scope>REVIEW</scope>
</reference>
<reference key="13">
    <citation type="journal article" date="2005" name="Biochem. Biophys. Res. Commun.">
        <title>The tyrosine kinases Fyn and Hck favor the recruitment of tyrosine-phosphorylated APOBEC3G into vif-defective HIV-1 particles.</title>
        <authorList>
            <person name="Douaisi M."/>
            <person name="Dussart S."/>
            <person name="Courcoul M."/>
            <person name="Bessou G."/>
            <person name="Lerner E.C."/>
            <person name="Decroly E."/>
            <person name="Vigne R."/>
        </authorList>
    </citation>
    <scope>INTERACTION WITH HOST HCK AND FYN</scope>
</reference>
<reference key="14">
    <citation type="journal article" date="2006" name="J. Biol. Chem.">
        <title>A zinc-binding region in Vif binds Cul5 and determines cullin selection.</title>
        <authorList>
            <person name="Mehle A."/>
            <person name="Thomas E.R."/>
            <person name="Rajendran K.S."/>
            <person name="Gabuzda D."/>
        </authorList>
    </citation>
    <scope>FUNCTION</scope>
    <scope>IDENTIFICATION IN A HOST ECS COMPLEX</scope>
    <scope>ZINC-BINDING</scope>
    <scope>MUTAGENESIS OF GLU-76; HIS-80; ASP-104; HIS-108; CYS-114; 120-ILE--LEU-124; 121-ARG-LYS-122; CYS-133 AND HIS-139</scope>
</reference>
<reference key="15">
    <citation type="journal article" date="2007" name="J. Virol.">
        <title>Identification of two distinct human immunodeficiency virus type 1 Vif determinants critical for interactions with human APOBEC3G and APOBEC3F.</title>
        <authorList>
            <person name="Russell R.A."/>
            <person name="Pathak V.K."/>
        </authorList>
    </citation>
    <scope>INTERACTION WITH HOST APOBEC3F AND APOBEC3G</scope>
</reference>
<reference key="16">
    <citation type="journal article" date="2007" name="Virology">
        <title>The Vif accessory protein alters the cell cycle of human immunodeficiency virus type 1 infected cells.</title>
        <authorList>
            <person name="Wang J."/>
            <person name="Shackelford J.M."/>
            <person name="Casella C.R."/>
            <person name="Shivers D.K."/>
            <person name="Rapaport E.L."/>
            <person name="Liu B."/>
            <person name="Yu X.F."/>
            <person name="Finkel T.H."/>
        </authorList>
    </citation>
    <scope>FUNCTION IN CELL CYCLE ARREST</scope>
</reference>
<reference key="17">
    <citation type="journal article" date="2008" name="J. Mol. Biol.">
        <title>Characterization of conserved motifs in HIV-1 Vif required for APOBEC3G and APOBEC3F interaction.</title>
        <authorList>
            <person name="He Z."/>
            <person name="Zhang W."/>
            <person name="Chen G."/>
            <person name="Xu R."/>
            <person name="Yu X.F."/>
        </authorList>
    </citation>
    <scope>INTERACTION WITH HOST APOBEC3F AND APOBEC3G</scope>
</reference>
<reference key="18">
    <citation type="journal article" date="2009" name="Proc. Natl. Acad. Sci. U.S.A.">
        <title>HIV-1 Vif-mediated ubiquitination/degradation of APOBEC3G involves four critical lysine residues in its C-terminal domain.</title>
        <authorList>
            <person name="Iwatani Y."/>
            <person name="Chan D.S."/>
            <person name="Liu L."/>
            <person name="Yoshii H."/>
            <person name="Shibata J."/>
            <person name="Yamamoto N."/>
            <person name="Levin J.G."/>
            <person name="Gronenborn A.M."/>
            <person name="Sugiura W."/>
        </authorList>
    </citation>
    <scope>FUNCTION</scope>
</reference>
<reference key="19">
    <citation type="journal article" date="2009" name="Retrovirology">
        <title>MDM2 is a novel E3 ligase for HIV-1 Vif.</title>
        <authorList>
            <person name="Izumi T."/>
            <person name="Takaori-Kondo A."/>
            <person name="Shirakawa K."/>
            <person name="Higashitsuji H."/>
            <person name="Itoh K."/>
            <person name="Io K."/>
            <person name="Matsui M."/>
            <person name="Iwai K."/>
            <person name="Kondoh H."/>
            <person name="Sato T."/>
            <person name="Tomonaga M."/>
            <person name="Ikeda S."/>
            <person name="Akari H."/>
            <person name="Koyanagi Y."/>
            <person name="Fujita J."/>
            <person name="Uchiyama T."/>
        </authorList>
    </citation>
    <scope>INTERACTION WITH HOST MDM2</scope>
</reference>
<reference key="20">
    <citation type="journal article" date="2009" name="Nucleic Acids Res.">
        <title>Mutational analysis of the HIV-1 auxiliary protein Vif identifies independent domains important for the physical and functional interaction with HIV-1 reverse transcriptase.</title>
        <authorList>
            <person name="Kataropoulou A."/>
            <person name="Bovolenta C."/>
            <person name="Belfiore A."/>
            <person name="Trabatti S."/>
            <person name="Garbelli A."/>
            <person name="Porcellini S."/>
            <person name="Lupo R."/>
            <person name="Maga G."/>
        </authorList>
    </citation>
    <scope>INTERACTION WITH THE REVERSE TRANSCRIPTASE</scope>
</reference>
<reference key="21">
    <citation type="journal article" date="2010" name="Nucleic Acids Res.">
        <title>HIV-1 Vif binds to APOBEC3G mRNA and inhibits its translation.</title>
        <authorList>
            <person name="Mercenne G."/>
            <person name="Bernacchi S."/>
            <person name="Richer D."/>
            <person name="Bec G."/>
            <person name="Henriet S."/>
            <person name="Paillart J.C."/>
            <person name="Marquet R."/>
        </authorList>
    </citation>
    <scope>FUNCTION</scope>
</reference>
<reference key="22">
    <citation type="journal article" date="2011" name="Nature">
        <title>Vif hijacks CBF-beta to degrade APOBEC3G and promote HIV-1 infection.</title>
        <authorList>
            <person name="Jaeger S."/>
            <person name="Kim D.Y."/>
            <person name="Hultquist J.F."/>
            <person name="Shindo K."/>
            <person name="LaRue R.S."/>
            <person name="Kwon E."/>
            <person name="Li M."/>
            <person name="Anderson B.D."/>
            <person name="Yen L."/>
            <person name="Stanley D."/>
            <person name="Mahon C."/>
            <person name="Kane J."/>
            <person name="Franks-Skiba K."/>
            <person name="Cimermancic P."/>
            <person name="Burlingame A."/>
            <person name="Sali A."/>
            <person name="Craik C.S."/>
            <person name="Harris R.S."/>
            <person name="Gross J.D."/>
            <person name="Krogan N.J."/>
        </authorList>
    </citation>
    <scope>FUNCTION</scope>
    <scope>IDENTIFICATION IN A HOST ECS COMPLEX</scope>
</reference>
<reference key="23">
    <citation type="journal article" date="2013" name="J. Mol. Biol.">
        <title>Dispersed sites of HIV Vif-dependent polyubiquitination in the DNA deaminase APOBEC3F.</title>
        <authorList>
            <person name="Albin J.S."/>
            <person name="Anderson J.S."/>
            <person name="Johnson J.R."/>
            <person name="Harjes E."/>
            <person name="Matsuo H."/>
            <person name="Krogan N.J."/>
            <person name="Harris R.S."/>
        </authorList>
    </citation>
    <scope>FUNCTION</scope>
</reference>
<reference evidence="23 24 25" key="24">
    <citation type="journal article" date="2023" name="Nature">
        <title>The structural basis for HIV-1 Vif antagonism of human APOBEC3G.</title>
        <authorList>
            <person name="Li Y.L."/>
            <person name="Langley C.A."/>
            <person name="Azumaya C.M."/>
            <person name="Echeverria I."/>
            <person name="Chesarino N.M."/>
            <person name="Emerman M."/>
            <person name="Cheng Y."/>
            <person name="Gross J.D."/>
        </authorList>
    </citation>
    <scope>STRUCTURE BY ELECTRON MICROSCOPY (2.70 ANGSTROMS) IN COMPLEX WITH HOST CBFB; ABOBEC3G; ELOB; ELOC AND ZINC</scope>
    <scope>FUNCTION</scope>
    <scope>IDENTIFICATION IN A HOST ECS COMPLEX</scope>
    <scope>MUTAGENESIS OF LYS-22; SER-23; LYS-26 AND TYR-40</scope>
</reference>
<sequence>MENRWQVMIVWQVDRMRIRTWKSLVKHHMYVSGKARGWFYRHHYESPHPRISSEVHIPLGDARLVITTYWGLHTGERDWHLGQGVSIEWRKKRYSTQVDPELADQLIHLYYFDCFSDSAIRKALLGHIVSPRCEYQAGHNKVGSLQYLALAALITPKKIKPPLPSVTKLTEDRWNKPQKTKGHRGSHTMNGH</sequence>
<gene>
    <name evidence="1" type="primary">vif</name>
</gene>
<protein>
    <recommendedName>
        <fullName evidence="1">Virion infectivity factor</fullName>
        <shortName evidence="1">Vif</shortName>
    </recommendedName>
    <alternativeName>
        <fullName evidence="1">SOR protein</fullName>
    </alternativeName>
    <component>
        <recommendedName>
            <fullName evidence="1">p17</fullName>
        </recommendedName>
    </component>
    <component>
        <recommendedName>
            <fullName evidence="1">p7</fullName>
        </recommendedName>
    </component>
</protein>
<proteinExistence type="evidence at protein level"/>
<evidence type="ECO:0000255" key="1">
    <source>
        <dbReference type="HAMAP-Rule" id="MF_04081"/>
    </source>
</evidence>
<evidence type="ECO:0000256" key="2">
    <source>
        <dbReference type="SAM" id="MobiDB-lite"/>
    </source>
</evidence>
<evidence type="ECO:0000269" key="3">
    <source>
    </source>
</evidence>
<evidence type="ECO:0000269" key="4">
    <source>
    </source>
</evidence>
<evidence type="ECO:0000269" key="5">
    <source>
    </source>
</evidence>
<evidence type="ECO:0000269" key="6">
    <source>
    </source>
</evidence>
<evidence type="ECO:0000269" key="7">
    <source>
    </source>
</evidence>
<evidence type="ECO:0000269" key="8">
    <source>
    </source>
</evidence>
<evidence type="ECO:0000269" key="9">
    <source>
    </source>
</evidence>
<evidence type="ECO:0000269" key="10">
    <source>
    </source>
</evidence>
<evidence type="ECO:0000269" key="11">
    <source>
    </source>
</evidence>
<evidence type="ECO:0000269" key="12">
    <source>
    </source>
</evidence>
<evidence type="ECO:0000269" key="13">
    <source>
    </source>
</evidence>
<evidence type="ECO:0000269" key="14">
    <source>
    </source>
</evidence>
<evidence type="ECO:0000269" key="15">
    <source>
    </source>
</evidence>
<evidence type="ECO:0000269" key="16">
    <source>
    </source>
</evidence>
<evidence type="ECO:0000269" key="17">
    <source>
    </source>
</evidence>
<evidence type="ECO:0000269" key="18">
    <source>
    </source>
</evidence>
<evidence type="ECO:0000269" key="19">
    <source>
    </source>
</evidence>
<evidence type="ECO:0000269" key="20">
    <source>
    </source>
</evidence>
<evidence type="ECO:0000269" key="21">
    <source>
    </source>
</evidence>
<evidence type="ECO:0000305" key="22"/>
<evidence type="ECO:0007744" key="23">
    <source>
        <dbReference type="PDB" id="8CX0"/>
    </source>
</evidence>
<evidence type="ECO:0007744" key="24">
    <source>
        <dbReference type="PDB" id="8CX1"/>
    </source>
</evidence>
<evidence type="ECO:0007744" key="25">
    <source>
        <dbReference type="PDB" id="8CX2"/>
    </source>
</evidence>
<evidence type="ECO:0007829" key="26">
    <source>
        <dbReference type="PDB" id="8CX0"/>
    </source>
</evidence>
<name>VIF_HV1H2</name>
<accession>P69723</accession>
<accession>P03401</accession>